<reference key="1">
    <citation type="journal article" date="2007" name="Photosyn. Res.">
        <title>Complete nucleotide sequence of the freshwater unicellular cyanobacterium Synechococcus elongatus PCC 6301 chromosome: gene content and organization.</title>
        <authorList>
            <person name="Sugita C."/>
            <person name="Ogata K."/>
            <person name="Shikata M."/>
            <person name="Jikuya H."/>
            <person name="Takano J."/>
            <person name="Furumichi M."/>
            <person name="Kanehisa M."/>
            <person name="Omata T."/>
            <person name="Sugiura M."/>
            <person name="Sugita M."/>
        </authorList>
    </citation>
    <scope>NUCLEOTIDE SEQUENCE [LARGE SCALE GENOMIC DNA]</scope>
    <source>
        <strain>ATCC 27144 / PCC 6301 / SAUG 1402/1</strain>
    </source>
</reference>
<keyword id="KW-0169">Cobalamin biosynthesis</keyword>
<keyword id="KW-0315">Glutamine amidotransferase</keyword>
<dbReference type="EMBL" id="AP008231">
    <property type="protein sequence ID" value="BAD79491.1"/>
    <property type="molecule type" value="Genomic_DNA"/>
</dbReference>
<dbReference type="RefSeq" id="WP_011243613.1">
    <property type="nucleotide sequence ID" value="NC_006576.1"/>
</dbReference>
<dbReference type="SMR" id="Q5N2H9"/>
<dbReference type="KEGG" id="syc:syc1301_c"/>
<dbReference type="eggNOG" id="COG1492">
    <property type="taxonomic scope" value="Bacteria"/>
</dbReference>
<dbReference type="UniPathway" id="UPA00148"/>
<dbReference type="Proteomes" id="UP000001175">
    <property type="component" value="Chromosome"/>
</dbReference>
<dbReference type="GO" id="GO:0015420">
    <property type="term" value="F:ABC-type vitamin B12 transporter activity"/>
    <property type="evidence" value="ECO:0007669"/>
    <property type="project" value="UniProtKB-UniRule"/>
</dbReference>
<dbReference type="GO" id="GO:0003824">
    <property type="term" value="F:catalytic activity"/>
    <property type="evidence" value="ECO:0007669"/>
    <property type="project" value="InterPro"/>
</dbReference>
<dbReference type="GO" id="GO:0009236">
    <property type="term" value="P:cobalamin biosynthetic process"/>
    <property type="evidence" value="ECO:0007669"/>
    <property type="project" value="UniProtKB-UniRule"/>
</dbReference>
<dbReference type="CDD" id="cd05389">
    <property type="entry name" value="CobQ_N"/>
    <property type="match status" value="1"/>
</dbReference>
<dbReference type="CDD" id="cd01750">
    <property type="entry name" value="GATase1_CobQ"/>
    <property type="match status" value="1"/>
</dbReference>
<dbReference type="Gene3D" id="3.40.50.880">
    <property type="match status" value="1"/>
</dbReference>
<dbReference type="Gene3D" id="3.40.50.300">
    <property type="entry name" value="P-loop containing nucleotide triphosphate hydrolases"/>
    <property type="match status" value="1"/>
</dbReference>
<dbReference type="HAMAP" id="MF_00028">
    <property type="entry name" value="CobQ"/>
    <property type="match status" value="1"/>
</dbReference>
<dbReference type="InterPro" id="IPR029062">
    <property type="entry name" value="Class_I_gatase-like"/>
</dbReference>
<dbReference type="InterPro" id="IPR002586">
    <property type="entry name" value="CobQ/CobB/MinD/ParA_Nub-bd_dom"/>
</dbReference>
<dbReference type="InterPro" id="IPR033949">
    <property type="entry name" value="CobQ_GATase1"/>
</dbReference>
<dbReference type="InterPro" id="IPR047045">
    <property type="entry name" value="CobQ_N"/>
</dbReference>
<dbReference type="InterPro" id="IPR004459">
    <property type="entry name" value="CobQ_synth"/>
</dbReference>
<dbReference type="InterPro" id="IPR011698">
    <property type="entry name" value="GATase_3"/>
</dbReference>
<dbReference type="InterPro" id="IPR027417">
    <property type="entry name" value="P-loop_NTPase"/>
</dbReference>
<dbReference type="NCBIfam" id="TIGR00313">
    <property type="entry name" value="cobQ"/>
    <property type="match status" value="1"/>
</dbReference>
<dbReference type="NCBIfam" id="NF001989">
    <property type="entry name" value="PRK00784.1"/>
    <property type="match status" value="1"/>
</dbReference>
<dbReference type="PANTHER" id="PTHR21343:SF1">
    <property type="entry name" value="COBYRIC ACID SYNTHASE"/>
    <property type="match status" value="1"/>
</dbReference>
<dbReference type="PANTHER" id="PTHR21343">
    <property type="entry name" value="DETHIOBIOTIN SYNTHETASE"/>
    <property type="match status" value="1"/>
</dbReference>
<dbReference type="Pfam" id="PF01656">
    <property type="entry name" value="CbiA"/>
    <property type="match status" value="1"/>
</dbReference>
<dbReference type="Pfam" id="PF07685">
    <property type="entry name" value="GATase_3"/>
    <property type="match status" value="1"/>
</dbReference>
<dbReference type="SUPFAM" id="SSF52317">
    <property type="entry name" value="Class I glutamine amidotransferase-like"/>
    <property type="match status" value="1"/>
</dbReference>
<dbReference type="SUPFAM" id="SSF52540">
    <property type="entry name" value="P-loop containing nucleoside triphosphate hydrolases"/>
    <property type="match status" value="1"/>
</dbReference>
<dbReference type="PROSITE" id="PS51274">
    <property type="entry name" value="GATASE_COBBQ"/>
    <property type="match status" value="1"/>
</dbReference>
<organism>
    <name type="scientific">Synechococcus sp. (strain ATCC 27144 / PCC 6301 / SAUG 1402/1)</name>
    <name type="common">Anacystis nidulans</name>
    <dbReference type="NCBI Taxonomy" id="269084"/>
    <lineage>
        <taxon>Bacteria</taxon>
        <taxon>Bacillati</taxon>
        <taxon>Cyanobacteriota</taxon>
        <taxon>Cyanophyceae</taxon>
        <taxon>Synechococcales</taxon>
        <taxon>Synechococcaceae</taxon>
        <taxon>Synechococcus</taxon>
    </lineage>
</organism>
<accession>Q5N2H9</accession>
<evidence type="ECO:0000255" key="1">
    <source>
        <dbReference type="HAMAP-Rule" id="MF_00028"/>
    </source>
</evidence>
<protein>
    <recommendedName>
        <fullName evidence="1">Cobyric acid synthase</fullName>
    </recommendedName>
</protein>
<name>COBQ_SYNP6</name>
<gene>
    <name evidence="1" type="primary">cobQ</name>
    <name type="ordered locus">syc1301_c</name>
</gene>
<feature type="chain" id="PRO_0000141334" description="Cobyric acid synthase">
    <location>
        <begin position="1"/>
        <end position="491"/>
    </location>
</feature>
<feature type="domain" description="GATase cobBQ-type" evidence="1">
    <location>
        <begin position="250"/>
        <end position="439"/>
    </location>
</feature>
<feature type="active site" description="Nucleophile" evidence="1">
    <location>
        <position position="331"/>
    </location>
</feature>
<feature type="active site" evidence="1">
    <location>
        <position position="431"/>
    </location>
</feature>
<comment type="function">
    <text evidence="1">Catalyzes amidations at positions B, D, E, and G on adenosylcobyrinic A,C-diamide. NH(2) groups are provided by glutamine, and one molecule of ATP is hydrogenolyzed for each amidation.</text>
</comment>
<comment type="pathway">
    <text evidence="1">Cofactor biosynthesis; adenosylcobalamin biosynthesis.</text>
</comment>
<comment type="similarity">
    <text evidence="1">Belongs to the CobB/CobQ family. CobQ subfamily.</text>
</comment>
<sequence length="491" mass="54579">MPALMVVGCTSHAGKSLITAAICRLLRRQGWRVAPFKGQNMALNAYVTASGGEIGYAQAFQAWAAGVEPTIEMNPILLKPQGDMTSQVVLKGRAVGRTLAERYYQDYFEVGWEAICEALEQLQADYDWIVCEGAGSPAEINLKHRDLTNLRVAKHLQAPTLLLVDIDRGGSFAHLIGTLELLDPDERSLIRGFVFNKFRGRRELLQSGLDWLEERTGIPVLGVIPWIDRAFPSEDSLDLMERRRRKTQAEVTIAVIRLPRIANFTDFDPLESEPSVQVRYVGLQDELGYPDAVILPGSKTTISDLLDLQRSGLAQAIRDYAAAGGTVLGICGGFQMMGQHILDLEGTEGIEGQFEGLHLFPTQTWFTAEKTLRQRQTTARSPQAGLPITGYEIHQGQTRLDSDSEEFLPIFDDPKLGLCDRNGNLWGTYLHGIFDNGAWRRAWLNSLRHRRGLKALPTSIGHYQAQRDDLIDALSDAVEPYLNLSPLLTAL</sequence>
<proteinExistence type="inferred from homology"/>